<reference key="1">
    <citation type="journal article" date="2003" name="Proc. Natl. Acad. Sci. U.S.A.">
        <title>The complete genome sequence of the Arabidopsis and tomato pathogen Pseudomonas syringae pv. tomato DC3000.</title>
        <authorList>
            <person name="Buell C.R."/>
            <person name="Joardar V."/>
            <person name="Lindeberg M."/>
            <person name="Selengut J."/>
            <person name="Paulsen I.T."/>
            <person name="Gwinn M.L."/>
            <person name="Dodson R.J."/>
            <person name="DeBoy R.T."/>
            <person name="Durkin A.S."/>
            <person name="Kolonay J.F."/>
            <person name="Madupu R."/>
            <person name="Daugherty S.C."/>
            <person name="Brinkac L.M."/>
            <person name="Beanan M.J."/>
            <person name="Haft D.H."/>
            <person name="Nelson W.C."/>
            <person name="Davidsen T.M."/>
            <person name="Zafar N."/>
            <person name="Zhou L."/>
            <person name="Liu J."/>
            <person name="Yuan Q."/>
            <person name="Khouri H.M."/>
            <person name="Fedorova N.B."/>
            <person name="Tran B."/>
            <person name="Russell D."/>
            <person name="Berry K.J."/>
            <person name="Utterback T.R."/>
            <person name="Van Aken S.E."/>
            <person name="Feldblyum T.V."/>
            <person name="D'Ascenzo M."/>
            <person name="Deng W.-L."/>
            <person name="Ramos A.R."/>
            <person name="Alfano J.R."/>
            <person name="Cartinhour S."/>
            <person name="Chatterjee A.K."/>
            <person name="Delaney T.P."/>
            <person name="Lazarowitz S.G."/>
            <person name="Martin G.B."/>
            <person name="Schneider D.J."/>
            <person name="Tang X."/>
            <person name="Bender C.L."/>
            <person name="White O."/>
            <person name="Fraser C.M."/>
            <person name="Collmer A."/>
        </authorList>
    </citation>
    <scope>NUCLEOTIDE SEQUENCE [LARGE SCALE GENOMIC DNA]</scope>
    <source>
        <strain>ATCC BAA-871 / DC3000</strain>
    </source>
</reference>
<proteinExistence type="inferred from homology"/>
<gene>
    <name evidence="1" type="primary">hisA</name>
    <name type="ordered locus">PSPTO_5335</name>
</gene>
<organism>
    <name type="scientific">Pseudomonas syringae pv. tomato (strain ATCC BAA-871 / DC3000)</name>
    <dbReference type="NCBI Taxonomy" id="223283"/>
    <lineage>
        <taxon>Bacteria</taxon>
        <taxon>Pseudomonadati</taxon>
        <taxon>Pseudomonadota</taxon>
        <taxon>Gammaproteobacteria</taxon>
        <taxon>Pseudomonadales</taxon>
        <taxon>Pseudomonadaceae</taxon>
        <taxon>Pseudomonas</taxon>
    </lineage>
</organism>
<name>HIS4_PSESM</name>
<comment type="catalytic activity">
    <reaction evidence="1">
        <text>1-(5-phospho-beta-D-ribosyl)-5-[(5-phospho-beta-D-ribosylamino)methylideneamino]imidazole-4-carboxamide = 5-[(5-phospho-1-deoxy-D-ribulos-1-ylimino)methylamino]-1-(5-phospho-beta-D-ribosyl)imidazole-4-carboxamide</text>
        <dbReference type="Rhea" id="RHEA:15469"/>
        <dbReference type="ChEBI" id="CHEBI:58435"/>
        <dbReference type="ChEBI" id="CHEBI:58525"/>
        <dbReference type="EC" id="5.3.1.16"/>
    </reaction>
</comment>
<comment type="pathway">
    <text evidence="1">Amino-acid biosynthesis; L-histidine biosynthesis; L-histidine from 5-phospho-alpha-D-ribose 1-diphosphate: step 4/9.</text>
</comment>
<comment type="subcellular location">
    <subcellularLocation>
        <location evidence="1">Cytoplasm</location>
    </subcellularLocation>
</comment>
<comment type="similarity">
    <text evidence="1">Belongs to the HisA/HisF family.</text>
</comment>
<keyword id="KW-0028">Amino-acid biosynthesis</keyword>
<keyword id="KW-0963">Cytoplasm</keyword>
<keyword id="KW-0368">Histidine biosynthesis</keyword>
<keyword id="KW-0413">Isomerase</keyword>
<keyword id="KW-1185">Reference proteome</keyword>
<feature type="chain" id="PRO_0000142040" description="1-(5-phosphoribosyl)-5-[(5-phosphoribosylamino)methylideneamino] imidazole-4-carboxamide isomerase">
    <location>
        <begin position="1"/>
        <end position="245"/>
    </location>
</feature>
<feature type="active site" description="Proton acceptor" evidence="1">
    <location>
        <position position="8"/>
    </location>
</feature>
<feature type="active site" description="Proton donor" evidence="1">
    <location>
        <position position="130"/>
    </location>
</feature>
<sequence length="245" mass="25876">MLIIPAIDLKDGACVRLRQGRMEDSTVFSDDPVAMAAKWVDGGCRRLHLVDLNGAFEGQPVNGDVVTAIAKRYPNLPIQIGGGIRSLETIEHYIKAGVSYVIIGTKAVKDPEFVAQACRAFPGKVIVGLDAKDGFVATDGWAEVSTVQVIDLAKRFEADGVSAIVYTDIAKDGMMQGCNIPFTAALAAATRIPVIASGGIHNLGDIQALLNAKAPGIIGAITGRAIYEGTLDVAEAQALCDREQR</sequence>
<evidence type="ECO:0000255" key="1">
    <source>
        <dbReference type="HAMAP-Rule" id="MF_01014"/>
    </source>
</evidence>
<accession>Q87UG3</accession>
<dbReference type="EC" id="5.3.1.16" evidence="1"/>
<dbReference type="EMBL" id="AE016853">
    <property type="protein sequence ID" value="AAO58761.1"/>
    <property type="molecule type" value="Genomic_DNA"/>
</dbReference>
<dbReference type="RefSeq" id="NP_795066.1">
    <property type="nucleotide sequence ID" value="NC_004578.1"/>
</dbReference>
<dbReference type="RefSeq" id="WP_007246848.1">
    <property type="nucleotide sequence ID" value="NC_004578.1"/>
</dbReference>
<dbReference type="SMR" id="Q87UG3"/>
<dbReference type="STRING" id="223283.PSPTO_5335"/>
<dbReference type="GeneID" id="61791064"/>
<dbReference type="KEGG" id="pst:PSPTO_5335"/>
<dbReference type="PATRIC" id="fig|223283.9.peg.5462"/>
<dbReference type="eggNOG" id="COG0106">
    <property type="taxonomic scope" value="Bacteria"/>
</dbReference>
<dbReference type="HOGENOM" id="CLU_048577_1_1_6"/>
<dbReference type="OrthoDB" id="9807749at2"/>
<dbReference type="PhylomeDB" id="Q87UG3"/>
<dbReference type="UniPathway" id="UPA00031">
    <property type="reaction ID" value="UER00009"/>
</dbReference>
<dbReference type="Proteomes" id="UP000002515">
    <property type="component" value="Chromosome"/>
</dbReference>
<dbReference type="GO" id="GO:0005737">
    <property type="term" value="C:cytoplasm"/>
    <property type="evidence" value="ECO:0007669"/>
    <property type="project" value="UniProtKB-SubCell"/>
</dbReference>
<dbReference type="GO" id="GO:0003949">
    <property type="term" value="F:1-(5-phosphoribosyl)-5-[(5-phosphoribosylamino)methylideneamino]imidazole-4-carboxamide isomerase activity"/>
    <property type="evidence" value="ECO:0007669"/>
    <property type="project" value="UniProtKB-UniRule"/>
</dbReference>
<dbReference type="GO" id="GO:0000105">
    <property type="term" value="P:L-histidine biosynthetic process"/>
    <property type="evidence" value="ECO:0007669"/>
    <property type="project" value="UniProtKB-UniRule"/>
</dbReference>
<dbReference type="GO" id="GO:0000162">
    <property type="term" value="P:L-tryptophan biosynthetic process"/>
    <property type="evidence" value="ECO:0007669"/>
    <property type="project" value="TreeGrafter"/>
</dbReference>
<dbReference type="CDD" id="cd04732">
    <property type="entry name" value="HisA"/>
    <property type="match status" value="1"/>
</dbReference>
<dbReference type="FunFam" id="3.20.20.70:FF:000009">
    <property type="entry name" value="1-(5-phosphoribosyl)-5-[(5-phosphoribosylamino)methylideneamino] imidazole-4-carboxamide isomerase"/>
    <property type="match status" value="1"/>
</dbReference>
<dbReference type="Gene3D" id="3.20.20.70">
    <property type="entry name" value="Aldolase class I"/>
    <property type="match status" value="1"/>
</dbReference>
<dbReference type="HAMAP" id="MF_01014">
    <property type="entry name" value="HisA"/>
    <property type="match status" value="1"/>
</dbReference>
<dbReference type="InterPro" id="IPR013785">
    <property type="entry name" value="Aldolase_TIM"/>
</dbReference>
<dbReference type="InterPro" id="IPR006062">
    <property type="entry name" value="His_biosynth"/>
</dbReference>
<dbReference type="InterPro" id="IPR006063">
    <property type="entry name" value="HisA_bact_arch"/>
</dbReference>
<dbReference type="InterPro" id="IPR044524">
    <property type="entry name" value="Isoase_HisA-like"/>
</dbReference>
<dbReference type="InterPro" id="IPR023016">
    <property type="entry name" value="Isoase_HisA-like_bact"/>
</dbReference>
<dbReference type="InterPro" id="IPR011060">
    <property type="entry name" value="RibuloseP-bd_barrel"/>
</dbReference>
<dbReference type="NCBIfam" id="TIGR00007">
    <property type="entry name" value="1-(5-phosphoribosyl)-5-[(5-phosphoribosylamino)methylideneamino]imidazole-4-carboxamide isomerase"/>
    <property type="match status" value="1"/>
</dbReference>
<dbReference type="PANTHER" id="PTHR43090">
    <property type="entry name" value="1-(5-PHOSPHORIBOSYL)-5-[(5-PHOSPHORIBOSYLAMINO)METHYLIDENEAMINO] IMIDAZOLE-4-CARBOXAMIDE ISOMERASE"/>
    <property type="match status" value="1"/>
</dbReference>
<dbReference type="PANTHER" id="PTHR43090:SF2">
    <property type="entry name" value="1-(5-PHOSPHORIBOSYL)-5-[(5-PHOSPHORIBOSYLAMINO)METHYLIDENEAMINO] IMIDAZOLE-4-CARBOXAMIDE ISOMERASE"/>
    <property type="match status" value="1"/>
</dbReference>
<dbReference type="Pfam" id="PF00977">
    <property type="entry name" value="His_biosynth"/>
    <property type="match status" value="1"/>
</dbReference>
<dbReference type="SUPFAM" id="SSF51366">
    <property type="entry name" value="Ribulose-phoshate binding barrel"/>
    <property type="match status" value="1"/>
</dbReference>
<protein>
    <recommendedName>
        <fullName evidence="1">1-(5-phosphoribosyl)-5-[(5-phosphoribosylamino)methylideneamino] imidazole-4-carboxamide isomerase</fullName>
        <ecNumber evidence="1">5.3.1.16</ecNumber>
    </recommendedName>
    <alternativeName>
        <fullName evidence="1">Phosphoribosylformimino-5-aminoimidazole carboxamide ribotide isomerase</fullName>
    </alternativeName>
</protein>